<proteinExistence type="inferred from homology"/>
<reference key="1">
    <citation type="journal article" date="2005" name="J. Infect. Dis.">
        <title>Genome sequence of a serotype M28 strain of group A Streptococcus: potential new insights into puerperal sepsis and bacterial disease specificity.</title>
        <authorList>
            <person name="Green N.M."/>
            <person name="Zhang S."/>
            <person name="Porcella S.F."/>
            <person name="Nagiec M.J."/>
            <person name="Barbian K.D."/>
            <person name="Beres S.B."/>
            <person name="Lefebvre R.B."/>
            <person name="Musser J.M."/>
        </authorList>
    </citation>
    <scope>NUCLEOTIDE SEQUENCE [LARGE SCALE GENOMIC DNA]</scope>
    <source>
        <strain>MGAS6180</strain>
    </source>
</reference>
<dbReference type="EC" id="6.3.4.-" evidence="1"/>
<dbReference type="EMBL" id="CP000056">
    <property type="protein sequence ID" value="AAX71373.1"/>
    <property type="molecule type" value="Genomic_DNA"/>
</dbReference>
<dbReference type="RefSeq" id="WP_011184181.1">
    <property type="nucleotide sequence ID" value="NC_007296.2"/>
</dbReference>
<dbReference type="SMR" id="Q48V83"/>
<dbReference type="KEGG" id="spb:M28_Spy0259"/>
<dbReference type="HOGENOM" id="CLU_038915_0_2_9"/>
<dbReference type="GO" id="GO:0005737">
    <property type="term" value="C:cytoplasm"/>
    <property type="evidence" value="ECO:0007669"/>
    <property type="project" value="UniProtKB-SubCell"/>
</dbReference>
<dbReference type="GO" id="GO:0005524">
    <property type="term" value="F:ATP binding"/>
    <property type="evidence" value="ECO:0007669"/>
    <property type="project" value="UniProtKB-KW"/>
</dbReference>
<dbReference type="GO" id="GO:0016879">
    <property type="term" value="F:ligase activity, forming carbon-nitrogen bonds"/>
    <property type="evidence" value="ECO:0007669"/>
    <property type="project" value="UniProtKB-UniRule"/>
</dbReference>
<dbReference type="GO" id="GO:0000049">
    <property type="term" value="F:tRNA binding"/>
    <property type="evidence" value="ECO:0007669"/>
    <property type="project" value="UniProtKB-KW"/>
</dbReference>
<dbReference type="GO" id="GO:0006400">
    <property type="term" value="P:tRNA modification"/>
    <property type="evidence" value="ECO:0007669"/>
    <property type="project" value="UniProtKB-UniRule"/>
</dbReference>
<dbReference type="Gene3D" id="3.40.50.620">
    <property type="entry name" value="HUPs"/>
    <property type="match status" value="1"/>
</dbReference>
<dbReference type="HAMAP" id="MF_01539">
    <property type="entry name" value="TmcAL"/>
    <property type="match status" value="1"/>
</dbReference>
<dbReference type="InterPro" id="IPR014729">
    <property type="entry name" value="Rossmann-like_a/b/a_fold"/>
</dbReference>
<dbReference type="InterPro" id="IPR008513">
    <property type="entry name" value="tRNA(Met)_cyd_acetate_ligase"/>
</dbReference>
<dbReference type="NCBIfam" id="NF010191">
    <property type="entry name" value="PRK13670.1"/>
    <property type="match status" value="1"/>
</dbReference>
<dbReference type="PANTHER" id="PTHR37825">
    <property type="entry name" value="TRNA(MET) CYTIDINE ACETATE LIGASE"/>
    <property type="match status" value="1"/>
</dbReference>
<dbReference type="PANTHER" id="PTHR37825:SF1">
    <property type="entry name" value="TRNA(MET) CYTIDINE ACETATE LIGASE"/>
    <property type="match status" value="1"/>
</dbReference>
<dbReference type="Pfam" id="PF05636">
    <property type="entry name" value="HIGH_NTase1"/>
    <property type="match status" value="1"/>
</dbReference>
<dbReference type="SUPFAM" id="SSF52374">
    <property type="entry name" value="Nucleotidylyl transferase"/>
    <property type="match status" value="1"/>
</dbReference>
<gene>
    <name evidence="1" type="primary">tmcAL</name>
    <name type="ordered locus">M28_Spy0259</name>
</gene>
<name>TMCAL_STRPM</name>
<keyword id="KW-0067">ATP-binding</keyword>
<keyword id="KW-0963">Cytoplasm</keyword>
<keyword id="KW-0436">Ligase</keyword>
<keyword id="KW-0547">Nucleotide-binding</keyword>
<keyword id="KW-0694">RNA-binding</keyword>
<keyword id="KW-0819">tRNA processing</keyword>
<keyword id="KW-0820">tRNA-binding</keyword>
<feature type="chain" id="PRO_0000300197" description="tRNA(Met) cytidine acetate ligase">
    <location>
        <begin position="1"/>
        <end position="368"/>
    </location>
</feature>
<feature type="binding site" evidence="1">
    <location>
        <begin position="7"/>
        <end position="20"/>
    </location>
    <ligand>
        <name>ATP</name>
        <dbReference type="ChEBI" id="CHEBI:30616"/>
    </ligand>
</feature>
<feature type="binding site" evidence="1">
    <location>
        <position position="96"/>
    </location>
    <ligand>
        <name>ATP</name>
        <dbReference type="ChEBI" id="CHEBI:30616"/>
    </ligand>
</feature>
<feature type="binding site" evidence="1">
    <location>
        <position position="152"/>
    </location>
    <ligand>
        <name>ATP</name>
        <dbReference type="ChEBI" id="CHEBI:30616"/>
    </ligand>
</feature>
<feature type="binding site" evidence="1">
    <location>
        <position position="175"/>
    </location>
    <ligand>
        <name>ATP</name>
        <dbReference type="ChEBI" id="CHEBI:30616"/>
    </ligand>
</feature>
<sequence length="368" mass="41646">MTVTGIIAEFNPFHNGHKYLLETAEGLKIIAMSGNFMQRGEPALIDKWIRSEMALKNGADIVVELPFFVSVQSADYFAQGAIDILCQLGIQQLAFGTEDVIDYQKLIKVYEKKSKQMTAYLSTLEDTLSYPQKTQKMWEIFAGVKFSGQTPNHILGLSYAKASAGKHIQLCPIKRQGAAYHSKDKNHLLASASAIRQHLNDWDFISHSVPNAGLLINNPHMSWDHYFSFLKYQILNHSDLTSIFQVNDELASRIKKAIKVSQNIDHLVDTVATKRYTKARVRRILTYILVNAKEPTLPKGIHILGFTSKGQAHLKKLKKSRPLITRIGAETWDEMTQKADSIYQLGHQDIPEQSFGRIPIIIKNERLN</sequence>
<comment type="function">
    <text evidence="1">Catalyzes the formation of N(4)-acetylcytidine (ac(4)C) at the wobble position of elongator tRNA(Met), using acetate and ATP as substrates. First activates an acetate ion to form acetyladenylate (Ac-AMP) and then transfers the acetyl group to tRNA to form ac(4)C34.</text>
</comment>
<comment type="catalytic activity">
    <reaction evidence="1">
        <text>cytidine(34) in elongator tRNA(Met) + acetate + ATP = N(4)-acetylcytidine(34) in elongator tRNA(Met) + AMP + diphosphate</text>
        <dbReference type="Rhea" id="RHEA:58144"/>
        <dbReference type="Rhea" id="RHEA-COMP:10693"/>
        <dbReference type="Rhea" id="RHEA-COMP:10694"/>
        <dbReference type="ChEBI" id="CHEBI:30089"/>
        <dbReference type="ChEBI" id="CHEBI:30616"/>
        <dbReference type="ChEBI" id="CHEBI:33019"/>
        <dbReference type="ChEBI" id="CHEBI:74900"/>
        <dbReference type="ChEBI" id="CHEBI:82748"/>
        <dbReference type="ChEBI" id="CHEBI:456215"/>
    </reaction>
</comment>
<comment type="subcellular location">
    <subcellularLocation>
        <location evidence="1">Cytoplasm</location>
    </subcellularLocation>
</comment>
<comment type="similarity">
    <text evidence="1">Belongs to the TmcAL family.</text>
</comment>
<evidence type="ECO:0000255" key="1">
    <source>
        <dbReference type="HAMAP-Rule" id="MF_01539"/>
    </source>
</evidence>
<organism>
    <name type="scientific">Streptococcus pyogenes serotype M28 (strain MGAS6180)</name>
    <dbReference type="NCBI Taxonomy" id="319701"/>
    <lineage>
        <taxon>Bacteria</taxon>
        <taxon>Bacillati</taxon>
        <taxon>Bacillota</taxon>
        <taxon>Bacilli</taxon>
        <taxon>Lactobacillales</taxon>
        <taxon>Streptococcaceae</taxon>
        <taxon>Streptococcus</taxon>
    </lineage>
</organism>
<accession>Q48V83</accession>
<protein>
    <recommendedName>
        <fullName evidence="1">tRNA(Met) cytidine acetate ligase</fullName>
        <ecNumber evidence="1">6.3.4.-</ecNumber>
    </recommendedName>
</protein>